<gene>
    <name evidence="1" type="primary">rpl31</name>
</gene>
<proteinExistence type="inferred from homology"/>
<sequence length="73" mass="8568">MPQIDIHPEWYNDSKVYCDGKHIMTIGSTKPELHVDIWSGNHPFFTGSQRIIDTEGRVERFMRKYNVQKTADT</sequence>
<feature type="chain" id="PRO_0000173191" description="Large ribosomal subunit protein bL31c">
    <location>
        <begin position="1"/>
        <end position="73"/>
    </location>
</feature>
<protein>
    <recommendedName>
        <fullName evidence="1">Large ribosomal subunit protein bL31c</fullName>
    </recommendedName>
    <alternativeName>
        <fullName evidence="2">50S ribosomal protein L31, chloroplastic</fullName>
    </alternativeName>
</protein>
<geneLocation type="chloroplast"/>
<name>RK31_PALPL</name>
<accession>Q5MIM5</accession>
<comment type="function">
    <text evidence="1">Binds the 23S rRNA.</text>
</comment>
<comment type="subunit">
    <text evidence="1">Part of the 50S ribosomal subunit.</text>
</comment>
<comment type="subcellular location">
    <subcellularLocation>
        <location>Plastid</location>
        <location>Chloroplast</location>
    </subcellularLocation>
</comment>
<comment type="similarity">
    <text evidence="1">Belongs to the bacterial ribosomal protein bL31 family. Type A subfamily.</text>
</comment>
<keyword id="KW-0150">Chloroplast</keyword>
<keyword id="KW-0934">Plastid</keyword>
<keyword id="KW-0687">Ribonucleoprotein</keyword>
<keyword id="KW-0689">Ribosomal protein</keyword>
<keyword id="KW-0694">RNA-binding</keyword>
<keyword id="KW-0699">rRNA-binding</keyword>
<evidence type="ECO:0000255" key="1">
    <source>
        <dbReference type="HAMAP-Rule" id="MF_00501"/>
    </source>
</evidence>
<evidence type="ECO:0000305" key="2"/>
<dbReference type="EMBL" id="AY826509">
    <property type="protein sequence ID" value="AAV97636.1"/>
    <property type="molecule type" value="Genomic_DNA"/>
</dbReference>
<dbReference type="EMBL" id="AY826510">
    <property type="protein sequence ID" value="AAV97638.1"/>
    <property type="molecule type" value="Genomic_DNA"/>
</dbReference>
<dbReference type="EMBL" id="AY826512">
    <property type="protein sequence ID" value="AAV97642.1"/>
    <property type="molecule type" value="Genomic_DNA"/>
</dbReference>
<dbReference type="EMBL" id="AY826511">
    <property type="protein sequence ID" value="AAV97640.1"/>
    <property type="molecule type" value="Genomic_DNA"/>
</dbReference>
<dbReference type="EMBL" id="AY826513">
    <property type="protein sequence ID" value="AAV97644.1"/>
    <property type="molecule type" value="Genomic_DNA"/>
</dbReference>
<dbReference type="EMBL" id="AY826508">
    <property type="protein sequence ID" value="AAV97634.1"/>
    <property type="molecule type" value="Genomic_DNA"/>
</dbReference>
<dbReference type="EMBL" id="AY826514">
    <property type="protein sequence ID" value="AAV97646.1"/>
    <property type="molecule type" value="Genomic_DNA"/>
</dbReference>
<dbReference type="RefSeq" id="YP_009294372.1">
    <property type="nucleotide sequence ID" value="NC_031147.1"/>
</dbReference>
<dbReference type="GeneID" id="29070315"/>
<dbReference type="GO" id="GO:0009507">
    <property type="term" value="C:chloroplast"/>
    <property type="evidence" value="ECO:0007669"/>
    <property type="project" value="UniProtKB-SubCell"/>
</dbReference>
<dbReference type="GO" id="GO:1990904">
    <property type="term" value="C:ribonucleoprotein complex"/>
    <property type="evidence" value="ECO:0007669"/>
    <property type="project" value="UniProtKB-KW"/>
</dbReference>
<dbReference type="GO" id="GO:0005840">
    <property type="term" value="C:ribosome"/>
    <property type="evidence" value="ECO:0007669"/>
    <property type="project" value="UniProtKB-KW"/>
</dbReference>
<dbReference type="GO" id="GO:0019843">
    <property type="term" value="F:rRNA binding"/>
    <property type="evidence" value="ECO:0007669"/>
    <property type="project" value="UniProtKB-KW"/>
</dbReference>
<dbReference type="GO" id="GO:0003735">
    <property type="term" value="F:structural constituent of ribosome"/>
    <property type="evidence" value="ECO:0007669"/>
    <property type="project" value="InterPro"/>
</dbReference>
<dbReference type="GO" id="GO:0006412">
    <property type="term" value="P:translation"/>
    <property type="evidence" value="ECO:0007669"/>
    <property type="project" value="UniProtKB-UniRule"/>
</dbReference>
<dbReference type="Gene3D" id="4.10.830.30">
    <property type="entry name" value="Ribosomal protein L31"/>
    <property type="match status" value="1"/>
</dbReference>
<dbReference type="HAMAP" id="MF_00501">
    <property type="entry name" value="Ribosomal_bL31_1"/>
    <property type="match status" value="1"/>
</dbReference>
<dbReference type="InterPro" id="IPR034704">
    <property type="entry name" value="Ribosomal_bL28/bL31-like_sf"/>
</dbReference>
<dbReference type="InterPro" id="IPR002150">
    <property type="entry name" value="Ribosomal_bL31"/>
</dbReference>
<dbReference type="InterPro" id="IPR027491">
    <property type="entry name" value="Ribosomal_bL31_A"/>
</dbReference>
<dbReference type="InterPro" id="IPR042105">
    <property type="entry name" value="Ribosomal_bL31_sf"/>
</dbReference>
<dbReference type="NCBIfam" id="TIGR00105">
    <property type="entry name" value="L31"/>
    <property type="match status" value="1"/>
</dbReference>
<dbReference type="NCBIfam" id="NF001809">
    <property type="entry name" value="PRK00528.1"/>
    <property type="match status" value="1"/>
</dbReference>
<dbReference type="PANTHER" id="PTHR33280">
    <property type="entry name" value="50S RIBOSOMAL PROTEIN L31, CHLOROPLASTIC"/>
    <property type="match status" value="1"/>
</dbReference>
<dbReference type="PANTHER" id="PTHR33280:SF1">
    <property type="entry name" value="LARGE RIBOSOMAL SUBUNIT PROTEIN BL31C"/>
    <property type="match status" value="1"/>
</dbReference>
<dbReference type="Pfam" id="PF01197">
    <property type="entry name" value="Ribosomal_L31"/>
    <property type="match status" value="1"/>
</dbReference>
<dbReference type="PRINTS" id="PR01249">
    <property type="entry name" value="RIBOSOMALL31"/>
</dbReference>
<dbReference type="SUPFAM" id="SSF143800">
    <property type="entry name" value="L28p-like"/>
    <property type="match status" value="1"/>
</dbReference>
<dbReference type="PROSITE" id="PS01143">
    <property type="entry name" value="RIBOSOMAL_L31"/>
    <property type="match status" value="1"/>
</dbReference>
<reference key="1">
    <citation type="journal article" date="2005" name="Mol. Ecol.">
        <title>Phylogeographic analysis of the red seaweed Palmaria palmata reveals a Pleistocene marine glacial refugium in the English Channel.</title>
        <authorList>
            <person name="Provan J."/>
            <person name="Wattier R.A."/>
            <person name="Maggs C.A."/>
        </authorList>
    </citation>
    <scope>NUCLEOTIDE SEQUENCE [GENOMIC DNA]</scope>
</reference>
<organism>
    <name type="scientific">Palmaria palmata</name>
    <name type="common">Dulse</name>
    <name type="synonym">Rhodymenia palmata</name>
    <dbReference type="NCBI Taxonomy" id="2822"/>
    <lineage>
        <taxon>Eukaryota</taxon>
        <taxon>Rhodophyta</taxon>
        <taxon>Florideophyceae</taxon>
        <taxon>Nemaliophycidae</taxon>
        <taxon>Palmariales</taxon>
        <taxon>Palmariaceae</taxon>
        <taxon>Palmaria</taxon>
    </lineage>
</organism>